<proteinExistence type="evidence at transcript level"/>
<accession>P0DSS8</accession>
<accession>P33799</accession>
<reference key="1">
    <citation type="journal article" date="1993" name="Nature">
        <title>Potential virulence determinants in terminal regions of variola smallpox virus genome.</title>
        <authorList>
            <person name="Massung R.F."/>
            <person name="Esposito J.J."/>
            <person name="Liu L.I."/>
            <person name="Qi J."/>
            <person name="Utterback T.R."/>
            <person name="Knight J.C."/>
            <person name="Aubin L."/>
            <person name="Yuran T.E."/>
            <person name="Parsons J.M."/>
            <person name="Loparev V.N."/>
            <person name="Selivanov N.A."/>
            <person name="Cavallaro K.F."/>
            <person name="Kerlavage A.R."/>
            <person name="Mahy B.W.J."/>
            <person name="Venter J.C."/>
        </authorList>
    </citation>
    <scope>NUCLEOTIDE SEQUENCE [GENOMIC DNA]</scope>
    <source>
        <strain>Bangladesh-1975</strain>
    </source>
</reference>
<feature type="chain" id="PRO_0000448120" description="Ribonucleoside-diphosphate reductase small chain">
    <location>
        <begin position="1"/>
        <end position="319"/>
    </location>
</feature>
<feature type="region of interest" description="Interaction with R1" evidence="2">
    <location>
        <begin position="313"/>
        <end position="319"/>
    </location>
</feature>
<feature type="active site" evidence="3">
    <location>
        <position position="108"/>
    </location>
</feature>
<feature type="binding site" evidence="3">
    <location>
        <position position="70"/>
    </location>
    <ligand>
        <name>Fe cation</name>
        <dbReference type="ChEBI" id="CHEBI:24875"/>
        <label>1</label>
    </ligand>
</feature>
<feature type="binding site" evidence="3">
    <location>
        <position position="101"/>
    </location>
    <ligand>
        <name>Fe cation</name>
        <dbReference type="ChEBI" id="CHEBI:24875"/>
        <label>1</label>
    </ligand>
</feature>
<feature type="binding site" evidence="1">
    <location>
        <position position="101"/>
    </location>
    <ligand>
        <name>Fe cation</name>
        <dbReference type="ChEBI" id="CHEBI:24875"/>
        <label>2</label>
    </ligand>
</feature>
<feature type="binding site" evidence="3">
    <location>
        <position position="104"/>
    </location>
    <ligand>
        <name>Fe cation</name>
        <dbReference type="ChEBI" id="CHEBI:24875"/>
        <label>1</label>
    </ligand>
</feature>
<feature type="binding site" evidence="1">
    <location>
        <position position="163"/>
    </location>
    <ligand>
        <name>Fe cation</name>
        <dbReference type="ChEBI" id="CHEBI:24875"/>
        <label>2</label>
    </ligand>
</feature>
<feature type="binding site" evidence="1">
    <location>
        <position position="197"/>
    </location>
    <ligand>
        <name>Fe cation</name>
        <dbReference type="ChEBI" id="CHEBI:24875"/>
        <label>2</label>
    </ligand>
</feature>
<feature type="binding site" evidence="1">
    <location>
        <position position="200"/>
    </location>
    <ligand>
        <name>Fe cation</name>
        <dbReference type="ChEBI" id="CHEBI:24875"/>
        <label>2</label>
    </ligand>
</feature>
<comment type="function">
    <text evidence="2">Ribonucleoside-diphosphate reductase holoenzyme provides the precursors necessary for viral DNA synthesis. Allows virus growth in non-dividing cells. Catalyzes the biosynthesis of deoxyribonucleotides from the corresponding ribonucleotides.</text>
</comment>
<comment type="catalytic activity">
    <reaction evidence="3">
        <text>a 2'-deoxyribonucleoside 5'-diphosphate + [thioredoxin]-disulfide + H2O = a ribonucleoside 5'-diphosphate + [thioredoxin]-dithiol</text>
        <dbReference type="Rhea" id="RHEA:23252"/>
        <dbReference type="Rhea" id="RHEA-COMP:10698"/>
        <dbReference type="Rhea" id="RHEA-COMP:10700"/>
        <dbReference type="ChEBI" id="CHEBI:15377"/>
        <dbReference type="ChEBI" id="CHEBI:29950"/>
        <dbReference type="ChEBI" id="CHEBI:50058"/>
        <dbReference type="ChEBI" id="CHEBI:57930"/>
        <dbReference type="ChEBI" id="CHEBI:73316"/>
        <dbReference type="EC" id="1.17.4.1"/>
    </reaction>
</comment>
<comment type="cofactor">
    <cofactor evidence="1">
        <name>Fe cation</name>
        <dbReference type="ChEBI" id="CHEBI:24875"/>
    </cofactor>
    <text evidence="1">Binds 2 iron ions per subunit.</text>
</comment>
<comment type="subunit">
    <text evidence="2">Interacts with RNR1/OPG080 subunit. Can interact with host RNR1 supunit.</text>
</comment>
<comment type="induction">
    <text>Expressed early in the viral replicative cycle.</text>
</comment>
<comment type="similarity">
    <text evidence="4">Belongs to the ribonucleoside diphosphate reductase small chain family.</text>
</comment>
<comment type="sequence caution" evidence="4">
    <conflict type="erroneous initiation">
        <sequence resource="EMBL-CDS" id="AAA60776"/>
    </conflict>
    <text>Extended N-terminus.</text>
</comment>
<protein>
    <recommendedName>
        <fullName>Ribonucleoside-diphosphate reductase small chain</fullName>
        <ecNumber>1.17.4.1</ecNumber>
    </recommendedName>
    <alternativeName>
        <fullName>Ribonucleotide reductase small subunit</fullName>
    </alternativeName>
    <alternativeName>
        <fullName>Ribonucleotide reductase subunit 2</fullName>
        <shortName>RNR2</shortName>
    </alternativeName>
</protein>
<keyword id="KW-0215">Deoxyribonucleotide synthesis</keyword>
<keyword id="KW-0244">Early protein</keyword>
<keyword id="KW-0408">Iron</keyword>
<keyword id="KW-0479">Metal-binding</keyword>
<keyword id="KW-0560">Oxidoreductase</keyword>
<evidence type="ECO:0000250" key="1"/>
<evidence type="ECO:0000250" key="2">
    <source>
        <dbReference type="UniProtKB" id="P11158"/>
    </source>
</evidence>
<evidence type="ECO:0000255" key="3">
    <source>
        <dbReference type="PROSITE-ProRule" id="PRU10014"/>
    </source>
</evidence>
<evidence type="ECO:0000305" key="4"/>
<organism>
    <name type="scientific">Variola virus</name>
    <dbReference type="NCBI Taxonomy" id="10255"/>
    <lineage>
        <taxon>Viruses</taxon>
        <taxon>Varidnaviria</taxon>
        <taxon>Bamfordvirae</taxon>
        <taxon>Nucleocytoviricota</taxon>
        <taxon>Pokkesviricetes</taxon>
        <taxon>Chitovirales</taxon>
        <taxon>Poxviridae</taxon>
        <taxon>Chordopoxvirinae</taxon>
        <taxon>Orthopoxvirus</taxon>
    </lineage>
</organism>
<dbReference type="EC" id="1.17.4.1"/>
<dbReference type="EMBL" id="L22579">
    <property type="protein sequence ID" value="AAA60776.1"/>
    <property type="status" value="ALT_INIT"/>
    <property type="molecule type" value="Genomic_DNA"/>
</dbReference>
<dbReference type="PIR" id="T28466">
    <property type="entry name" value="T28466"/>
</dbReference>
<dbReference type="SMR" id="P0DSS8"/>
<dbReference type="Proteomes" id="UP000119805">
    <property type="component" value="Segment"/>
</dbReference>
<dbReference type="GO" id="GO:0046872">
    <property type="term" value="F:metal ion binding"/>
    <property type="evidence" value="ECO:0007669"/>
    <property type="project" value="UniProtKB-KW"/>
</dbReference>
<dbReference type="GO" id="GO:0004748">
    <property type="term" value="F:ribonucleoside-diphosphate reductase activity, thioredoxin disulfide as acceptor"/>
    <property type="evidence" value="ECO:0007669"/>
    <property type="project" value="UniProtKB-EC"/>
</dbReference>
<dbReference type="GO" id="GO:0009263">
    <property type="term" value="P:deoxyribonucleotide biosynthetic process"/>
    <property type="evidence" value="ECO:0007669"/>
    <property type="project" value="UniProtKB-KW"/>
</dbReference>
<dbReference type="CDD" id="cd01049">
    <property type="entry name" value="RNRR2"/>
    <property type="match status" value="1"/>
</dbReference>
<dbReference type="FunFam" id="1.10.620.20:FF:000004">
    <property type="entry name" value="Ribonucleoside-diphosphate reductase subunit M2 B"/>
    <property type="match status" value="1"/>
</dbReference>
<dbReference type="Gene3D" id="1.10.620.20">
    <property type="entry name" value="Ribonucleotide Reductase, subunit A"/>
    <property type="match status" value="1"/>
</dbReference>
<dbReference type="InterPro" id="IPR009078">
    <property type="entry name" value="Ferritin-like_SF"/>
</dbReference>
<dbReference type="InterPro" id="IPR012348">
    <property type="entry name" value="RNR-like"/>
</dbReference>
<dbReference type="InterPro" id="IPR033909">
    <property type="entry name" value="RNR_small"/>
</dbReference>
<dbReference type="InterPro" id="IPR030475">
    <property type="entry name" value="RNR_small_AS"/>
</dbReference>
<dbReference type="InterPro" id="IPR000358">
    <property type="entry name" value="RNR_small_fam"/>
</dbReference>
<dbReference type="PANTHER" id="PTHR23409">
    <property type="entry name" value="RIBONUCLEOSIDE-DIPHOSPHATE REDUCTASE SMALL CHAIN"/>
    <property type="match status" value="1"/>
</dbReference>
<dbReference type="PANTHER" id="PTHR23409:SF18">
    <property type="entry name" value="RIBONUCLEOSIDE-DIPHOSPHATE REDUCTASE SUBUNIT M2"/>
    <property type="match status" value="1"/>
</dbReference>
<dbReference type="Pfam" id="PF00268">
    <property type="entry name" value="Ribonuc_red_sm"/>
    <property type="match status" value="1"/>
</dbReference>
<dbReference type="SUPFAM" id="SSF47240">
    <property type="entry name" value="Ferritin-like"/>
    <property type="match status" value="1"/>
</dbReference>
<dbReference type="PROSITE" id="PS00368">
    <property type="entry name" value="RIBORED_SMALL"/>
    <property type="match status" value="1"/>
</dbReference>
<gene>
    <name type="primary">OPG048</name>
    <name type="ORF">C8L</name>
    <name type="ORF">F4L</name>
</gene>
<sequence length="319" mass="37074">MEPILAKNPNRFVIFPIQYHDIWNMYKKAEASFWTVEEVDISKDINDWNKLTPDEKYFIKHVLAFFAASDGIVNENLAERFCIEVQITEARCFYGFQMAIENIHSEMYSLLIDTYVKDSNEKNYLFNAIETMPCVKKKADWAQKWIHDSASYGERLIAFAAVEGIFFSGSFASIFWLKKRGLMPGLTFSNELISRDEGLHCDFACLMFKHLLYPPSEETVRSIITDAVSIEQEFLTVALPVKLIGMNCEMMKTYIKFVADRLISELGFKKIYNVTNPFDFMENISLEGKTNFFEKRVGEYQKMGVMSQEDNHFSLDVDF</sequence>
<name>RIR2_VARV</name>
<organismHost>
    <name type="scientific">Homo sapiens</name>
    <name type="common">Human</name>
    <dbReference type="NCBI Taxonomy" id="9606"/>
</organismHost>